<name>BEL3_FOAMV</name>
<organism>
    <name type="scientific">Human spumaretrovirus</name>
    <name type="common">SFVcpz(hu)</name>
    <name type="synonym">Human foamy virus</name>
    <dbReference type="NCBI Taxonomy" id="11963"/>
    <lineage>
        <taxon>Viruses</taxon>
        <taxon>Riboviria</taxon>
        <taxon>Pararnavirae</taxon>
        <taxon>Artverviricota</taxon>
        <taxon>Revtraviricetes</taxon>
        <taxon>Ortervirales</taxon>
        <taxon>Retroviridae</taxon>
        <taxon>Spumaretrovirinae</taxon>
        <taxon>Spumavirus</taxon>
        <taxon>Simian foamy virus</taxon>
    </lineage>
</organism>
<protein>
    <recommendedName>
        <fullName>Protein Bel-3</fullName>
    </recommendedName>
</protein>
<feature type="chain" id="PRO_0000125515" description="Protein Bel-3">
    <location>
        <begin position="1"/>
        <end position="160"/>
    </location>
</feature>
<feature type="sequence conflict" description="In Ref. 2; AAB48117." evidence="2" ref="2">
    <original>E</original>
    <variation>G</variation>
    <location>
        <position position="133"/>
    </location>
</feature>
<comment type="subunit">
    <text evidence="1">Homodimer.</text>
</comment>
<comment type="subcellular location">
    <subcellularLocation>
        <location evidence="1">Host cytoplasm</location>
    </subcellularLocation>
    <text>Expressed in low amounts in the cytoplasm of infected cells.</text>
</comment>
<comment type="sequence caution" evidence="2">
    <conflict type="erroneous initiation">
        <sequence resource="EMBL-CDS" id="CAA29089"/>
    </conflict>
</comment>
<accession>P14355</accession>
<accession>P89874</accession>
<gene>
    <name type="primary">bel3</name>
</gene>
<keyword id="KW-1035">Host cytoplasm</keyword>
<keyword id="KW-1185">Reference proteome</keyword>
<proteinExistence type="evidence at protein level"/>
<dbReference type="EMBL" id="X05592">
    <property type="protein sequence ID" value="CAA29089.1"/>
    <property type="status" value="ALT_INIT"/>
    <property type="molecule type" value="Genomic_DNA"/>
</dbReference>
<dbReference type="EMBL" id="U21247">
    <property type="protein sequence ID" value="AAB48117.1"/>
    <property type="molecule type" value="Genomic_RNA"/>
</dbReference>
<dbReference type="Proteomes" id="UP000138352">
    <property type="component" value="Genome"/>
</dbReference>
<dbReference type="GO" id="GO:0030430">
    <property type="term" value="C:host cell cytoplasm"/>
    <property type="evidence" value="ECO:0007669"/>
    <property type="project" value="UniProtKB-SubCell"/>
</dbReference>
<evidence type="ECO:0000269" key="1">
    <source>
    </source>
</evidence>
<evidence type="ECO:0000305" key="2"/>
<sequence length="160" mass="18236">MEIGVMQLCNMLIRLKGAVKQGAWHHLYLTTKLCSFIEPLWQTSPILGLEKDILLMVTKQLWKLMDLREEVTRRGCGGMSLETRENKEESITGKEVKNLITQILLLLIDVPGMRDTRFLNCPHSLLPLTSNAELLKHCLMAGKWSPKAEMIILAAERSEH</sequence>
<reference key="1">
    <citation type="journal article" date="1987" name="EMBO J.">
        <title>Nucleotide sequence analysis of the env gene and its flanking regions of the human spumaretrovirus reveals two novel genes.</title>
        <authorList>
            <person name="Fluegel R.M."/>
            <person name="Rethwilm A."/>
            <person name="Maurer B."/>
            <person name="Darai G."/>
        </authorList>
    </citation>
    <scope>NUCLEOTIDE SEQUENCE [GENOMIC DNA]</scope>
</reference>
<reference key="2">
    <citation type="submission" date="1995-02" db="EMBL/GenBank/DDBJ databases">
        <authorList>
            <person name="Fluegel R.M."/>
        </authorList>
    </citation>
    <scope>NUCLEOTIDE SEQUENCE [GENOMIC RNA]</scope>
</reference>
<reference key="3">
    <citation type="journal article" date="1994" name="AIDS Res. Hum. Retroviruses">
        <title>Identification and characterization of the Bel 3 protein of human foamy virus.</title>
        <authorList>
            <person name="Weissenberger J."/>
            <person name="Flugel R.M."/>
        </authorList>
    </citation>
    <scope>SUBUNIT</scope>
    <scope>SUBCELLULAR LOCATION</scope>
</reference>
<reference key="4">
    <citation type="journal article" date="2004" name="Curr. Opin. Microbiol.">
        <title>Foamy viruses-a world apart.</title>
        <authorList>
            <person name="Delelis O."/>
            <person name="Lehmann-Che J."/>
            <person name="Saib A."/>
        </authorList>
    </citation>
    <scope>REVIEW</scope>
</reference>
<organismHost>
    <name type="scientific">Homo sapiens</name>
    <name type="common">Human</name>
    <dbReference type="NCBI Taxonomy" id="9606"/>
</organismHost>